<reference key="1">
    <citation type="submission" date="2008-05" db="EMBL/GenBank/DDBJ databases">
        <title>Genome sequence of Helicobacter pylori from the remote Amazon: traces of Asian ancestry of the first Americans.</title>
        <authorList>
            <person name="Kersulyte D."/>
            <person name="Kalia A."/>
            <person name="Gilman R.H."/>
            <person name="Berg D.E."/>
        </authorList>
    </citation>
    <scope>NUCLEOTIDE SEQUENCE [LARGE SCALE GENOMIC DNA]</scope>
    <source>
        <strain>Shi470</strain>
    </source>
</reference>
<sequence length="377" mass="41812">MLKRASFVEVNTASLRHNFSAVKSIVPKDAHIMAVVKANAYGVGAIKASEIFLQEGAHYLGVATLDEALELHSHFSKTPILILGYSPNSNASMLIDNDLSAMIFSLEQAEVFSQTALKSQKRLKVHLKIDTGMHRLGLEPNFKSIEIIKKIRALKGLEVEGIFTHLSNADAKIKTHAKNQMKAFNAFLEQLSNQKIEFQYRHAYNSAGILSLCNGNENRFLNLYRPGIMLYGFYPSNGMKETCPTILKNVISLKAQIVQIRSVKKGEFIGYGEHFYTNEETLVGVLALGYADGLMRALGNRIQVAINNQLAPLIGKVCMDQCFVKLNNIQAKEGDEVILFGDKSAKANDASEIAALLNTIPYETISTLSKRLERVYI</sequence>
<comment type="function">
    <text evidence="1">Catalyzes the interconversion of L-alanine and D-alanine. May also act on other amino acids.</text>
</comment>
<comment type="catalytic activity">
    <reaction evidence="1">
        <text>L-alanine = D-alanine</text>
        <dbReference type="Rhea" id="RHEA:20249"/>
        <dbReference type="ChEBI" id="CHEBI:57416"/>
        <dbReference type="ChEBI" id="CHEBI:57972"/>
        <dbReference type="EC" id="5.1.1.1"/>
    </reaction>
</comment>
<comment type="cofactor">
    <cofactor evidence="1">
        <name>pyridoxal 5'-phosphate</name>
        <dbReference type="ChEBI" id="CHEBI:597326"/>
    </cofactor>
</comment>
<comment type="pathway">
    <text evidence="1">Amino-acid biosynthesis; D-alanine biosynthesis; D-alanine from L-alanine: step 1/1.</text>
</comment>
<comment type="similarity">
    <text evidence="1">Belongs to the alanine racemase family.</text>
</comment>
<evidence type="ECO:0000255" key="1">
    <source>
        <dbReference type="HAMAP-Rule" id="MF_01201"/>
    </source>
</evidence>
<accession>B2UU89</accession>
<gene>
    <name type="primary">alr</name>
    <name type="ordered locus">HPSH_04955</name>
</gene>
<proteinExistence type="inferred from homology"/>
<name>ALR_HELPS</name>
<feature type="chain" id="PRO_1000138603" description="Alanine racemase">
    <location>
        <begin position="1"/>
        <end position="377"/>
    </location>
</feature>
<feature type="active site" description="Proton acceptor; specific for D-alanine" evidence="1">
    <location>
        <position position="37"/>
    </location>
</feature>
<feature type="active site" description="Proton acceptor; specific for L-alanine" evidence="1">
    <location>
        <position position="271"/>
    </location>
</feature>
<feature type="binding site" evidence="1">
    <location>
        <position position="135"/>
    </location>
    <ligand>
        <name>substrate</name>
    </ligand>
</feature>
<feature type="binding site" evidence="1">
    <location>
        <position position="319"/>
    </location>
    <ligand>
        <name>substrate</name>
    </ligand>
</feature>
<feature type="modified residue" description="N6-(pyridoxal phosphate)lysine" evidence="1">
    <location>
        <position position="37"/>
    </location>
</feature>
<organism>
    <name type="scientific">Helicobacter pylori (strain Shi470)</name>
    <dbReference type="NCBI Taxonomy" id="512562"/>
    <lineage>
        <taxon>Bacteria</taxon>
        <taxon>Pseudomonadati</taxon>
        <taxon>Campylobacterota</taxon>
        <taxon>Epsilonproteobacteria</taxon>
        <taxon>Campylobacterales</taxon>
        <taxon>Helicobacteraceae</taxon>
        <taxon>Helicobacter</taxon>
    </lineage>
</organism>
<dbReference type="EC" id="5.1.1.1" evidence="1"/>
<dbReference type="EMBL" id="CP001072">
    <property type="protein sequence ID" value="ACD48421.1"/>
    <property type="molecule type" value="Genomic_DNA"/>
</dbReference>
<dbReference type="RefSeq" id="WP_000918001.1">
    <property type="nucleotide sequence ID" value="NC_010698.2"/>
</dbReference>
<dbReference type="SMR" id="B2UU89"/>
<dbReference type="KEGG" id="hps:HPSH_04955"/>
<dbReference type="HOGENOM" id="CLU_028393_2_2_7"/>
<dbReference type="UniPathway" id="UPA00042">
    <property type="reaction ID" value="UER00497"/>
</dbReference>
<dbReference type="GO" id="GO:0005829">
    <property type="term" value="C:cytosol"/>
    <property type="evidence" value="ECO:0007669"/>
    <property type="project" value="TreeGrafter"/>
</dbReference>
<dbReference type="GO" id="GO:0008784">
    <property type="term" value="F:alanine racemase activity"/>
    <property type="evidence" value="ECO:0007669"/>
    <property type="project" value="UniProtKB-UniRule"/>
</dbReference>
<dbReference type="GO" id="GO:0030170">
    <property type="term" value="F:pyridoxal phosphate binding"/>
    <property type="evidence" value="ECO:0007669"/>
    <property type="project" value="UniProtKB-UniRule"/>
</dbReference>
<dbReference type="GO" id="GO:0030632">
    <property type="term" value="P:D-alanine biosynthetic process"/>
    <property type="evidence" value="ECO:0007669"/>
    <property type="project" value="UniProtKB-UniRule"/>
</dbReference>
<dbReference type="CDD" id="cd00430">
    <property type="entry name" value="PLPDE_III_AR"/>
    <property type="match status" value="1"/>
</dbReference>
<dbReference type="FunFam" id="3.20.20.10:FF:000002">
    <property type="entry name" value="Alanine racemase"/>
    <property type="match status" value="1"/>
</dbReference>
<dbReference type="Gene3D" id="3.20.20.10">
    <property type="entry name" value="Alanine racemase"/>
    <property type="match status" value="1"/>
</dbReference>
<dbReference type="Gene3D" id="2.40.37.10">
    <property type="entry name" value="Lyase, Ornithine Decarboxylase, Chain A, domain 1"/>
    <property type="match status" value="1"/>
</dbReference>
<dbReference type="HAMAP" id="MF_01201">
    <property type="entry name" value="Ala_racemase"/>
    <property type="match status" value="1"/>
</dbReference>
<dbReference type="InterPro" id="IPR000821">
    <property type="entry name" value="Ala_racemase"/>
</dbReference>
<dbReference type="InterPro" id="IPR009006">
    <property type="entry name" value="Ala_racemase/Decarboxylase_C"/>
</dbReference>
<dbReference type="InterPro" id="IPR011079">
    <property type="entry name" value="Ala_racemase_C"/>
</dbReference>
<dbReference type="InterPro" id="IPR001608">
    <property type="entry name" value="Ala_racemase_N"/>
</dbReference>
<dbReference type="InterPro" id="IPR029066">
    <property type="entry name" value="PLP-binding_barrel"/>
</dbReference>
<dbReference type="NCBIfam" id="TIGR00492">
    <property type="entry name" value="alr"/>
    <property type="match status" value="1"/>
</dbReference>
<dbReference type="PANTHER" id="PTHR30511">
    <property type="entry name" value="ALANINE RACEMASE"/>
    <property type="match status" value="1"/>
</dbReference>
<dbReference type="PANTHER" id="PTHR30511:SF0">
    <property type="entry name" value="ALANINE RACEMASE, CATABOLIC-RELATED"/>
    <property type="match status" value="1"/>
</dbReference>
<dbReference type="Pfam" id="PF00842">
    <property type="entry name" value="Ala_racemase_C"/>
    <property type="match status" value="1"/>
</dbReference>
<dbReference type="Pfam" id="PF01168">
    <property type="entry name" value="Ala_racemase_N"/>
    <property type="match status" value="1"/>
</dbReference>
<dbReference type="PRINTS" id="PR00992">
    <property type="entry name" value="ALARACEMASE"/>
</dbReference>
<dbReference type="SMART" id="SM01005">
    <property type="entry name" value="Ala_racemase_C"/>
    <property type="match status" value="1"/>
</dbReference>
<dbReference type="SUPFAM" id="SSF50621">
    <property type="entry name" value="Alanine racemase C-terminal domain-like"/>
    <property type="match status" value="1"/>
</dbReference>
<dbReference type="SUPFAM" id="SSF51419">
    <property type="entry name" value="PLP-binding barrel"/>
    <property type="match status" value="1"/>
</dbReference>
<protein>
    <recommendedName>
        <fullName evidence="1">Alanine racemase</fullName>
        <ecNumber evidence="1">5.1.1.1</ecNumber>
    </recommendedName>
</protein>
<keyword id="KW-0413">Isomerase</keyword>
<keyword id="KW-0663">Pyridoxal phosphate</keyword>